<protein>
    <recommendedName>
        <fullName evidence="4">Norbelladine 4'-O-methyltransferase</fullName>
        <ecNumber evidence="1">2.1.1.336</ecNumber>
    </recommendedName>
</protein>
<keyword id="KW-0017">Alkaloid metabolism</keyword>
<keyword id="KW-0479">Metal-binding</keyword>
<keyword id="KW-0489">Methyltransferase</keyword>
<keyword id="KW-0949">S-adenosyl-L-methionine</keyword>
<keyword id="KW-0808">Transferase</keyword>
<reference key="1">
    <citation type="journal article" date="2017" name="Sci. Rep.">
        <title>Transcriptome and metabolome profiling of Narcissus pseudonarcissus 'King Alfred' reveal components of Amaryllidaceae alkaloid metabolism.</title>
        <authorList>
            <person name="Singh A."/>
            <person name="Desgagne-Penix I."/>
        </authorList>
    </citation>
    <scope>NUCLEOTIDE SEQUENCE [MRNA]</scope>
    <scope>FUNCTION</scope>
    <scope>REVIEW ON THE AMARYLLIDACEAE ALKALOID METABOLISM</scope>
    <scope>PATHWAY</scope>
    <scope>TISSUE SPECIFICITY</scope>
    <scope>GENE FAMILY</scope>
    <scope>NOMENCLATURE</scope>
    <source>
        <strain>cv. King Alfred</strain>
        <tissue>Bulb</tissue>
    </source>
</reference>
<gene>
    <name evidence="4" type="primary">N4OMT</name>
</gene>
<comment type="function">
    <text evidence="1 4">4'-O-methyltransferase converting norbelladine to 4'-O-methylnorbelladine (By similarity). 4'-O-methylnorbelladine is a precursor to all Amaryllidaceae alkaloids such as galanthamine, lycorine and haemanthamine, and including haemanthamine- and crinamine-type alkaloids, promising anticancer agents (PubMed:29229969).</text>
</comment>
<comment type="catalytic activity">
    <reaction evidence="1">
        <text>norbelladine + S-adenosyl-L-methionine = 4'-O-methylnorbelladine + S-adenosyl-L-homocysteine + H(+)</text>
        <dbReference type="Rhea" id="RHEA:51268"/>
        <dbReference type="ChEBI" id="CHEBI:15378"/>
        <dbReference type="ChEBI" id="CHEBI:57856"/>
        <dbReference type="ChEBI" id="CHEBI:59789"/>
        <dbReference type="ChEBI" id="CHEBI:133993"/>
        <dbReference type="ChEBI" id="CHEBI:134001"/>
        <dbReference type="EC" id="2.1.1.336"/>
    </reaction>
</comment>
<comment type="cofactor">
    <cofactor evidence="1">
        <name>Mg(2+)</name>
        <dbReference type="ChEBI" id="CHEBI:18420"/>
    </cofactor>
</comment>
<comment type="pathway">
    <text evidence="4">Alkaloid biosynthesis.</text>
</comment>
<comment type="tissue specificity">
    <text evidence="3">Mostly expressed in bulbs, and, to a lower extent, in stems and roots.</text>
</comment>
<comment type="similarity">
    <text evidence="5">Belongs to the class I-like SAM-binding methyltransferase superfamily. Cation-dependent O-methyltransferase family.</text>
</comment>
<dbReference type="EC" id="2.1.1.336" evidence="1"/>
<dbReference type="EMBL" id="MF416096">
    <property type="protein sequence ID" value="AUG71941.1"/>
    <property type="molecule type" value="mRNA"/>
</dbReference>
<dbReference type="SMR" id="A0A2H5AIZ6"/>
<dbReference type="GO" id="GO:0046872">
    <property type="term" value="F:metal ion binding"/>
    <property type="evidence" value="ECO:0007669"/>
    <property type="project" value="UniProtKB-KW"/>
</dbReference>
<dbReference type="GO" id="GO:0008171">
    <property type="term" value="F:O-methyltransferase activity"/>
    <property type="evidence" value="ECO:0007669"/>
    <property type="project" value="InterPro"/>
</dbReference>
<dbReference type="GO" id="GO:0008757">
    <property type="term" value="F:S-adenosylmethionine-dependent methyltransferase activity"/>
    <property type="evidence" value="ECO:0007669"/>
    <property type="project" value="TreeGrafter"/>
</dbReference>
<dbReference type="GO" id="GO:0009820">
    <property type="term" value="P:alkaloid metabolic process"/>
    <property type="evidence" value="ECO:0007669"/>
    <property type="project" value="UniProtKB-KW"/>
</dbReference>
<dbReference type="GO" id="GO:0032259">
    <property type="term" value="P:methylation"/>
    <property type="evidence" value="ECO:0007669"/>
    <property type="project" value="UniProtKB-KW"/>
</dbReference>
<dbReference type="Gene3D" id="3.40.50.150">
    <property type="entry name" value="Vaccinia Virus protein VP39"/>
    <property type="match status" value="1"/>
</dbReference>
<dbReference type="InterPro" id="IPR050362">
    <property type="entry name" value="Cation-dep_OMT"/>
</dbReference>
<dbReference type="InterPro" id="IPR029063">
    <property type="entry name" value="SAM-dependent_MTases_sf"/>
</dbReference>
<dbReference type="InterPro" id="IPR002935">
    <property type="entry name" value="SAM_O-MeTrfase"/>
</dbReference>
<dbReference type="PANTHER" id="PTHR10509">
    <property type="entry name" value="O-METHYLTRANSFERASE-RELATED"/>
    <property type="match status" value="1"/>
</dbReference>
<dbReference type="PANTHER" id="PTHR10509:SF34">
    <property type="entry name" value="TAPETUM-SPECIFIC METHYLTRANSFERASE 1"/>
    <property type="match status" value="1"/>
</dbReference>
<dbReference type="Pfam" id="PF01596">
    <property type="entry name" value="Methyltransf_3"/>
    <property type="match status" value="1"/>
</dbReference>
<dbReference type="SUPFAM" id="SSF53335">
    <property type="entry name" value="S-adenosyl-L-methionine-dependent methyltransferases"/>
    <property type="match status" value="1"/>
</dbReference>
<dbReference type="PROSITE" id="PS51682">
    <property type="entry name" value="SAM_OMT_I"/>
    <property type="match status" value="1"/>
</dbReference>
<feature type="chain" id="PRO_0000450641" description="Norbelladine 4'-O-methyltransferase">
    <location>
        <begin position="1"/>
        <end position="239"/>
    </location>
</feature>
<feature type="binding site" evidence="2">
    <location>
        <position position="55"/>
    </location>
    <ligand>
        <name>S-adenosyl-L-methionine</name>
        <dbReference type="ChEBI" id="CHEBI:59789"/>
    </ligand>
</feature>
<feature type="binding site" evidence="2">
    <location>
        <position position="77"/>
    </location>
    <ligand>
        <name>S-adenosyl-L-methionine</name>
        <dbReference type="ChEBI" id="CHEBI:59789"/>
    </ligand>
</feature>
<feature type="binding site" evidence="2">
    <location>
        <begin position="79"/>
        <end position="80"/>
    </location>
    <ligand>
        <name>S-adenosyl-L-methionine</name>
        <dbReference type="ChEBI" id="CHEBI:59789"/>
    </ligand>
</feature>
<feature type="binding site" evidence="2">
    <location>
        <position position="85"/>
    </location>
    <ligand>
        <name>S-adenosyl-L-methionine</name>
        <dbReference type="ChEBI" id="CHEBI:59789"/>
    </ligand>
</feature>
<feature type="binding site" evidence="2">
    <location>
        <position position="103"/>
    </location>
    <ligand>
        <name>S-adenosyl-L-methionine</name>
        <dbReference type="ChEBI" id="CHEBI:59789"/>
    </ligand>
</feature>
<feature type="binding site" evidence="2">
    <location>
        <position position="132"/>
    </location>
    <ligand>
        <name>S-adenosyl-L-methionine</name>
        <dbReference type="ChEBI" id="CHEBI:59789"/>
    </ligand>
</feature>
<feature type="binding site" evidence="2">
    <location>
        <position position="155"/>
    </location>
    <ligand>
        <name>a divalent metal cation</name>
        <dbReference type="ChEBI" id="CHEBI:60240"/>
    </ligand>
</feature>
<feature type="binding site" evidence="2">
    <location>
        <position position="157"/>
    </location>
    <ligand>
        <name>S-adenosyl-L-methionine</name>
        <dbReference type="ChEBI" id="CHEBI:59789"/>
    </ligand>
</feature>
<feature type="binding site" evidence="2">
    <location>
        <position position="181"/>
    </location>
    <ligand>
        <name>a divalent metal cation</name>
        <dbReference type="ChEBI" id="CHEBI:60240"/>
    </ligand>
</feature>
<feature type="binding site" evidence="2">
    <location>
        <position position="182"/>
    </location>
    <ligand>
        <name>a divalent metal cation</name>
        <dbReference type="ChEBI" id="CHEBI:60240"/>
    </ligand>
</feature>
<proteinExistence type="evidence at transcript level"/>
<accession>A0A2H5AIZ6</accession>
<sequence length="239" mass="27194">MGASQDDYSLVHKNILHSEDLLKYILETSAYPREHEQLKGLREVTEKHEWSSALVPADEGLFLSMLLKLMNAKRTIEIGVYTGYSLLTTALALPEDGKITAIDVNKSFFEIGLPFIQKAGVEHKINFIESEALPVLDQMLQEMKEEDLYDYAFVDADKSNYANYHERLVKLVRIGGAILYDNTLWYGSVAYPEYPGLYPEDEVDRLSFRNLNTFLAADPRVEISQVSIGDGVTICRRLY</sequence>
<name>NOMT_NARPS</name>
<evidence type="ECO:0000250" key="1">
    <source>
        <dbReference type="UniProtKB" id="A0A077EWA5"/>
    </source>
</evidence>
<evidence type="ECO:0000255" key="2">
    <source>
        <dbReference type="PROSITE-ProRule" id="PRU01019"/>
    </source>
</evidence>
<evidence type="ECO:0000269" key="3">
    <source>
    </source>
</evidence>
<evidence type="ECO:0000303" key="4">
    <source>
    </source>
</evidence>
<evidence type="ECO:0000305" key="5"/>
<organism>
    <name type="scientific">Narcissus pseudonarcissus</name>
    <name type="common">Daffodil</name>
    <dbReference type="NCBI Taxonomy" id="39639"/>
    <lineage>
        <taxon>Eukaryota</taxon>
        <taxon>Viridiplantae</taxon>
        <taxon>Streptophyta</taxon>
        <taxon>Embryophyta</taxon>
        <taxon>Tracheophyta</taxon>
        <taxon>Spermatophyta</taxon>
        <taxon>Magnoliopsida</taxon>
        <taxon>Liliopsida</taxon>
        <taxon>Asparagales</taxon>
        <taxon>Amaryllidaceae</taxon>
        <taxon>Amaryllidoideae</taxon>
        <taxon>Narcissus</taxon>
    </lineage>
</organism>